<organism>
    <name type="scientific">Acinetobacter baumannii (strain ACICU)</name>
    <dbReference type="NCBI Taxonomy" id="405416"/>
    <lineage>
        <taxon>Bacteria</taxon>
        <taxon>Pseudomonadati</taxon>
        <taxon>Pseudomonadota</taxon>
        <taxon>Gammaproteobacteria</taxon>
        <taxon>Moraxellales</taxon>
        <taxon>Moraxellaceae</taxon>
        <taxon>Acinetobacter</taxon>
        <taxon>Acinetobacter calcoaceticus/baumannii complex</taxon>
    </lineage>
</organism>
<evidence type="ECO:0000255" key="1">
    <source>
        <dbReference type="HAMAP-Rule" id="MF_01382"/>
    </source>
</evidence>
<comment type="function">
    <text evidence="1">Part of the Sec protein translocase complex. Interacts with the SecYEG preprotein conducting channel. Has a central role in coupling the hydrolysis of ATP to the transfer of proteins into and across the cell membrane, serving both as a receptor for the preprotein-SecB complex and as an ATP-driven molecular motor driving the stepwise translocation of polypeptide chains across the membrane.</text>
</comment>
<comment type="catalytic activity">
    <reaction evidence="1">
        <text>ATP + H2O + cellular proteinSide 1 = ADP + phosphate + cellular proteinSide 2.</text>
        <dbReference type="EC" id="7.4.2.8"/>
    </reaction>
</comment>
<comment type="cofactor">
    <cofactor evidence="1">
        <name>Zn(2+)</name>
        <dbReference type="ChEBI" id="CHEBI:29105"/>
    </cofactor>
    <text evidence="1">May bind 1 zinc ion per subunit.</text>
</comment>
<comment type="subunit">
    <text evidence="1">Monomer and homodimer. Part of the essential Sec protein translocation apparatus which comprises SecA, SecYEG and auxiliary proteins SecDF-YajC and YidC.</text>
</comment>
<comment type="subcellular location">
    <subcellularLocation>
        <location evidence="1">Cell inner membrane</location>
        <topology evidence="1">Peripheral membrane protein</topology>
        <orientation evidence="1">Cytoplasmic side</orientation>
    </subcellularLocation>
    <subcellularLocation>
        <location evidence="1">Cytoplasm</location>
    </subcellularLocation>
    <text evidence="1">Distribution is 50-50.</text>
</comment>
<comment type="similarity">
    <text evidence="1">Belongs to the SecA family.</text>
</comment>
<sequence>MLASLIGGIFGTKNERELKRMRKIVEQINALEPTISALSDADLSAKTPEFKQRYNNGESLDKLLPEAFAVCREAAKRVMGMRHYDVQLIGGITLHEGKIAEMRTGEGKTLMGTLACYLNALSGEGVHVITVNDYLAQRDAELNRPLFEFLGLSIGTIYSMQEPAEKAAAYLADITYGTNNEFGFDYLRDNMVFSLAEKKQRGLHYAIIDEVDSILIDEARTPLIISGQSEDSSHLYTAINTIPPKLRPQKEEKVADGGHFWIDEKQRSVEMTEIGYETVEQELIQMGLLAEGESLYSATNLNLVHHVSAAIRAHFLFQRDVHYIIHDGEVVIVDEHTGRTMPGRRWSEGLHQAVEAKEGLAIQPENQTLATTTFQNYFRLYKKLSGMTGTADTEAAEMKEIYGLDVVIIPTHRPMIRNDQNDLIYLNRNGKYNAIIQEIMNIRQQGVAPILIGTATIEASEILSSKLKQAGIHHEVLNAKQHEREADIIAQAGSPNAVTIATNMAGRGTDIILGGNWKAKLAKLENPTPEDEARLKAQWEQDHEDVLQAGGLHIIGSERHESRRIDNQLRGRAGRQGDPGVSRFYLSLEDDLMRIFAGDRVVAMMRAMGLKEDEAIEHKMVSRSIENAQRKVEARNFDIRKNLLKYDDVNNEQRKIIYSQRDEILAENTLQEYVEEMHREVMQAMIANFIPPESIHDQWDVEGLENALRIDLGIELPVQEWLEQDRRLDEEGLVERISDEVIARYRQRRAQMGDESAAMLERHFVLNSLDRHWKDHLAAMDYLRQGIHLRGYAQKNPEQEYKKEAFNLFVNMLGVIKTDVVTDLSRVHIPTPEELAEMEAQQQQQAEAMKLSFEHDDVDGLTGEVTASQEALNDSATEQQTFPVPESRNAPCPCGSGLKYKQCHGKI</sequence>
<dbReference type="EC" id="7.4.2.8" evidence="1"/>
<dbReference type="EMBL" id="CP000863">
    <property type="protein sequence ID" value="ACC58422.1"/>
    <property type="molecule type" value="Genomic_DNA"/>
</dbReference>
<dbReference type="RefSeq" id="WP_000881348.1">
    <property type="nucleotide sequence ID" value="NZ_CP031380.1"/>
</dbReference>
<dbReference type="SMR" id="B2HYI3"/>
<dbReference type="KEGG" id="abc:ACICU_03110"/>
<dbReference type="HOGENOM" id="CLU_005314_3_0_6"/>
<dbReference type="Proteomes" id="UP000008839">
    <property type="component" value="Chromosome"/>
</dbReference>
<dbReference type="GO" id="GO:0031522">
    <property type="term" value="C:cell envelope Sec protein transport complex"/>
    <property type="evidence" value="ECO:0007669"/>
    <property type="project" value="TreeGrafter"/>
</dbReference>
<dbReference type="GO" id="GO:0005829">
    <property type="term" value="C:cytosol"/>
    <property type="evidence" value="ECO:0007669"/>
    <property type="project" value="TreeGrafter"/>
</dbReference>
<dbReference type="GO" id="GO:0005886">
    <property type="term" value="C:plasma membrane"/>
    <property type="evidence" value="ECO:0007669"/>
    <property type="project" value="UniProtKB-SubCell"/>
</dbReference>
<dbReference type="GO" id="GO:0005524">
    <property type="term" value="F:ATP binding"/>
    <property type="evidence" value="ECO:0007669"/>
    <property type="project" value="UniProtKB-UniRule"/>
</dbReference>
<dbReference type="GO" id="GO:0046872">
    <property type="term" value="F:metal ion binding"/>
    <property type="evidence" value="ECO:0007669"/>
    <property type="project" value="UniProtKB-KW"/>
</dbReference>
<dbReference type="GO" id="GO:0008564">
    <property type="term" value="F:protein-exporting ATPase activity"/>
    <property type="evidence" value="ECO:0007669"/>
    <property type="project" value="UniProtKB-EC"/>
</dbReference>
<dbReference type="GO" id="GO:0065002">
    <property type="term" value="P:intracellular protein transmembrane transport"/>
    <property type="evidence" value="ECO:0007669"/>
    <property type="project" value="UniProtKB-UniRule"/>
</dbReference>
<dbReference type="GO" id="GO:0017038">
    <property type="term" value="P:protein import"/>
    <property type="evidence" value="ECO:0007669"/>
    <property type="project" value="InterPro"/>
</dbReference>
<dbReference type="GO" id="GO:0006605">
    <property type="term" value="P:protein targeting"/>
    <property type="evidence" value="ECO:0007669"/>
    <property type="project" value="UniProtKB-UniRule"/>
</dbReference>
<dbReference type="GO" id="GO:0043952">
    <property type="term" value="P:protein transport by the Sec complex"/>
    <property type="evidence" value="ECO:0007669"/>
    <property type="project" value="TreeGrafter"/>
</dbReference>
<dbReference type="CDD" id="cd17928">
    <property type="entry name" value="DEXDc_SecA"/>
    <property type="match status" value="1"/>
</dbReference>
<dbReference type="CDD" id="cd18803">
    <property type="entry name" value="SF2_C_secA"/>
    <property type="match status" value="1"/>
</dbReference>
<dbReference type="FunFam" id="3.40.50.300:FF:000113">
    <property type="entry name" value="Preprotein translocase subunit SecA"/>
    <property type="match status" value="1"/>
</dbReference>
<dbReference type="FunFam" id="3.90.1440.10:FF:000001">
    <property type="entry name" value="Preprotein translocase subunit SecA"/>
    <property type="match status" value="1"/>
</dbReference>
<dbReference type="FunFam" id="1.10.3060.10:FF:000003">
    <property type="entry name" value="Protein translocase subunit SecA"/>
    <property type="match status" value="1"/>
</dbReference>
<dbReference type="Gene3D" id="1.10.3060.10">
    <property type="entry name" value="Helical scaffold and wing domains of SecA"/>
    <property type="match status" value="1"/>
</dbReference>
<dbReference type="Gene3D" id="3.40.50.300">
    <property type="entry name" value="P-loop containing nucleotide triphosphate hydrolases"/>
    <property type="match status" value="2"/>
</dbReference>
<dbReference type="Gene3D" id="3.90.1440.10">
    <property type="entry name" value="SecA, preprotein cross-linking domain"/>
    <property type="match status" value="1"/>
</dbReference>
<dbReference type="HAMAP" id="MF_01382">
    <property type="entry name" value="SecA"/>
    <property type="match status" value="1"/>
</dbReference>
<dbReference type="InterPro" id="IPR014001">
    <property type="entry name" value="Helicase_ATP-bd"/>
</dbReference>
<dbReference type="InterPro" id="IPR001650">
    <property type="entry name" value="Helicase_C-like"/>
</dbReference>
<dbReference type="InterPro" id="IPR027417">
    <property type="entry name" value="P-loop_NTPase"/>
</dbReference>
<dbReference type="InterPro" id="IPR004027">
    <property type="entry name" value="SEC_C_motif"/>
</dbReference>
<dbReference type="InterPro" id="IPR000185">
    <property type="entry name" value="SecA"/>
</dbReference>
<dbReference type="InterPro" id="IPR020937">
    <property type="entry name" value="SecA_CS"/>
</dbReference>
<dbReference type="InterPro" id="IPR011115">
    <property type="entry name" value="SecA_DEAD"/>
</dbReference>
<dbReference type="InterPro" id="IPR014018">
    <property type="entry name" value="SecA_motor_DEAD"/>
</dbReference>
<dbReference type="InterPro" id="IPR011130">
    <property type="entry name" value="SecA_preprotein_X-link_dom"/>
</dbReference>
<dbReference type="InterPro" id="IPR044722">
    <property type="entry name" value="SecA_SF2_C"/>
</dbReference>
<dbReference type="InterPro" id="IPR011116">
    <property type="entry name" value="SecA_Wing/Scaffold"/>
</dbReference>
<dbReference type="InterPro" id="IPR036266">
    <property type="entry name" value="SecA_Wing/Scaffold_sf"/>
</dbReference>
<dbReference type="InterPro" id="IPR036670">
    <property type="entry name" value="SecA_X-link_sf"/>
</dbReference>
<dbReference type="NCBIfam" id="NF009538">
    <property type="entry name" value="PRK12904.1"/>
    <property type="match status" value="1"/>
</dbReference>
<dbReference type="NCBIfam" id="TIGR00963">
    <property type="entry name" value="secA"/>
    <property type="match status" value="1"/>
</dbReference>
<dbReference type="PANTHER" id="PTHR30612:SF0">
    <property type="entry name" value="CHLOROPLAST PROTEIN-TRANSPORTING ATPASE"/>
    <property type="match status" value="1"/>
</dbReference>
<dbReference type="PANTHER" id="PTHR30612">
    <property type="entry name" value="SECA INNER MEMBRANE COMPONENT OF SEC PROTEIN SECRETION SYSTEM"/>
    <property type="match status" value="1"/>
</dbReference>
<dbReference type="Pfam" id="PF21090">
    <property type="entry name" value="P-loop_SecA"/>
    <property type="match status" value="1"/>
</dbReference>
<dbReference type="Pfam" id="PF02810">
    <property type="entry name" value="SEC-C"/>
    <property type="match status" value="1"/>
</dbReference>
<dbReference type="Pfam" id="PF07517">
    <property type="entry name" value="SecA_DEAD"/>
    <property type="match status" value="1"/>
</dbReference>
<dbReference type="Pfam" id="PF01043">
    <property type="entry name" value="SecA_PP_bind"/>
    <property type="match status" value="1"/>
</dbReference>
<dbReference type="Pfam" id="PF07516">
    <property type="entry name" value="SecA_SW"/>
    <property type="match status" value="1"/>
</dbReference>
<dbReference type="PRINTS" id="PR00906">
    <property type="entry name" value="SECA"/>
</dbReference>
<dbReference type="SMART" id="SM00957">
    <property type="entry name" value="SecA_DEAD"/>
    <property type="match status" value="1"/>
</dbReference>
<dbReference type="SMART" id="SM00958">
    <property type="entry name" value="SecA_PP_bind"/>
    <property type="match status" value="1"/>
</dbReference>
<dbReference type="SUPFAM" id="SSF81886">
    <property type="entry name" value="Helical scaffold and wing domains of SecA"/>
    <property type="match status" value="1"/>
</dbReference>
<dbReference type="SUPFAM" id="SSF52540">
    <property type="entry name" value="P-loop containing nucleoside triphosphate hydrolases"/>
    <property type="match status" value="2"/>
</dbReference>
<dbReference type="SUPFAM" id="SSF81767">
    <property type="entry name" value="Pre-protein crosslinking domain of SecA"/>
    <property type="match status" value="1"/>
</dbReference>
<dbReference type="PROSITE" id="PS01312">
    <property type="entry name" value="SECA"/>
    <property type="match status" value="1"/>
</dbReference>
<dbReference type="PROSITE" id="PS51196">
    <property type="entry name" value="SECA_MOTOR_DEAD"/>
    <property type="match status" value="1"/>
</dbReference>
<keyword id="KW-0067">ATP-binding</keyword>
<keyword id="KW-0997">Cell inner membrane</keyword>
<keyword id="KW-1003">Cell membrane</keyword>
<keyword id="KW-0963">Cytoplasm</keyword>
<keyword id="KW-0472">Membrane</keyword>
<keyword id="KW-0479">Metal-binding</keyword>
<keyword id="KW-0547">Nucleotide-binding</keyword>
<keyword id="KW-0653">Protein transport</keyword>
<keyword id="KW-1278">Translocase</keyword>
<keyword id="KW-0811">Translocation</keyword>
<keyword id="KW-0813">Transport</keyword>
<keyword id="KW-0862">Zinc</keyword>
<name>SECA_ACIBC</name>
<reference key="1">
    <citation type="journal article" date="2008" name="Antimicrob. Agents Chemother.">
        <title>Whole-genome pyrosequencing of an epidemic multidrug-resistant Acinetobacter baumannii strain belonging to the European clone II group.</title>
        <authorList>
            <person name="Iacono M."/>
            <person name="Villa L."/>
            <person name="Fortini D."/>
            <person name="Bordoni R."/>
            <person name="Imperi F."/>
            <person name="Bonnal R.J."/>
            <person name="Sicheritz-Ponten T."/>
            <person name="De Bellis G."/>
            <person name="Visca P."/>
            <person name="Cassone A."/>
            <person name="Carattoli A."/>
        </authorList>
    </citation>
    <scope>NUCLEOTIDE SEQUENCE [LARGE SCALE GENOMIC DNA]</scope>
    <source>
        <strain>ACICU</strain>
    </source>
</reference>
<proteinExistence type="inferred from homology"/>
<gene>
    <name evidence="1" type="primary">secA</name>
    <name type="ordered locus">ACICU_03110</name>
</gene>
<protein>
    <recommendedName>
        <fullName evidence="1">Protein translocase subunit SecA</fullName>
        <ecNumber evidence="1">7.4.2.8</ecNumber>
    </recommendedName>
</protein>
<feature type="chain" id="PRO_1000144963" description="Protein translocase subunit SecA">
    <location>
        <begin position="1"/>
        <end position="907"/>
    </location>
</feature>
<feature type="binding site" evidence="1">
    <location>
        <position position="87"/>
    </location>
    <ligand>
        <name>ATP</name>
        <dbReference type="ChEBI" id="CHEBI:30616"/>
    </ligand>
</feature>
<feature type="binding site" evidence="1">
    <location>
        <begin position="105"/>
        <end position="109"/>
    </location>
    <ligand>
        <name>ATP</name>
        <dbReference type="ChEBI" id="CHEBI:30616"/>
    </ligand>
</feature>
<feature type="binding site" evidence="1">
    <location>
        <position position="510"/>
    </location>
    <ligand>
        <name>ATP</name>
        <dbReference type="ChEBI" id="CHEBI:30616"/>
    </ligand>
</feature>
<feature type="binding site" evidence="1">
    <location>
        <position position="892"/>
    </location>
    <ligand>
        <name>Zn(2+)</name>
        <dbReference type="ChEBI" id="CHEBI:29105"/>
    </ligand>
</feature>
<feature type="binding site" evidence="1">
    <location>
        <position position="894"/>
    </location>
    <ligand>
        <name>Zn(2+)</name>
        <dbReference type="ChEBI" id="CHEBI:29105"/>
    </ligand>
</feature>
<feature type="binding site" evidence="1">
    <location>
        <position position="903"/>
    </location>
    <ligand>
        <name>Zn(2+)</name>
        <dbReference type="ChEBI" id="CHEBI:29105"/>
    </ligand>
</feature>
<feature type="binding site" evidence="1">
    <location>
        <position position="904"/>
    </location>
    <ligand>
        <name>Zn(2+)</name>
        <dbReference type="ChEBI" id="CHEBI:29105"/>
    </ligand>
</feature>
<accession>B2HYI3</accession>